<comment type="function">
    <text>Catalyzes the oxidation of 3-carboxy-2-hydroxy-4-methylpentanoate (3-isopropylmalate) to 3-carboxy-4-methyl-2-oxopentanoate. The product decarboxylates to 4-methyl-2 oxopentanoate.</text>
</comment>
<comment type="catalytic activity">
    <reaction>
        <text>(2R,3S)-3-isopropylmalate + NAD(+) = 4-methyl-2-oxopentanoate + CO2 + NADH</text>
        <dbReference type="Rhea" id="RHEA:32271"/>
        <dbReference type="ChEBI" id="CHEBI:16526"/>
        <dbReference type="ChEBI" id="CHEBI:17865"/>
        <dbReference type="ChEBI" id="CHEBI:35121"/>
        <dbReference type="ChEBI" id="CHEBI:57540"/>
        <dbReference type="ChEBI" id="CHEBI:57945"/>
        <dbReference type="EC" id="1.1.1.85"/>
    </reaction>
</comment>
<comment type="cofactor">
    <cofactor>
        <name>Mg(2+)</name>
        <dbReference type="ChEBI" id="CHEBI:18420"/>
    </cofactor>
    <cofactor>
        <name>Mn(2+)</name>
        <dbReference type="ChEBI" id="CHEBI:29035"/>
    </cofactor>
    <text>Binds 1 Mg(2+) or Mn(2+) ion per subunit.</text>
</comment>
<comment type="biophysicochemical properties">
    <kinetics>
        <KM>1.26 uM for 3-isopropylmalate (at pH 8 and 60 degrees Celsius)</KM>
        <KM>40.9 uM for NAD</KM>
    </kinetics>
</comment>
<comment type="pathway">
    <text>Amino-acid biosynthesis; L-leucine biosynthesis; L-leucine from 3-methyl-2-oxobutanoate: step 3/4.</text>
</comment>
<comment type="subunit">
    <text evidence="2 3 4 5">Homodimer.</text>
</comment>
<comment type="interaction">
    <interactant intactId="EBI-9699580">
        <id>Q5SIY4</id>
    </interactant>
    <interactant intactId="EBI-9699580">
        <id>Q5SIY4</id>
        <label>leuB</label>
    </interactant>
    <organismsDiffer>false</organismsDiffer>
    <experiments>2</experiments>
</comment>
<comment type="subcellular location">
    <subcellularLocation>
        <location>Cytoplasm</location>
    </subcellularLocation>
</comment>
<comment type="similarity">
    <text evidence="7">Belongs to the isocitrate and isopropylmalate dehydrogenases family. LeuB type 1 subfamily.</text>
</comment>
<accession>Q5SIY4</accession>
<reference key="1">
    <citation type="journal article" date="1984" name="J. Biol. Chem.">
        <title>High guanine plus cytosine content in the third letter of codons of an extreme thermophile. DNA sequence of the isopropylmalate dehydrogenase of Thermus thermophilus.</title>
        <authorList>
            <person name="Kagawa Y."/>
            <person name="Nojima H."/>
            <person name="Nukiwa N."/>
            <person name="Ishizuka M."/>
            <person name="Nakajima T."/>
            <person name="Yasuhara T."/>
            <person name="Tanaka T."/>
            <person name="Oshima T."/>
        </authorList>
    </citation>
    <scope>NUCLEOTIDE SEQUENCE [GENOMIC DNA]</scope>
</reference>
<reference key="2">
    <citation type="journal article" date="1994" name="Eur. J. Biochem.">
        <title>Hydrophobic interaction at the subunit interface contributes to the thermostability of 3-isopropylmalate dehydrogenase from an extreme thermophile, Thermus thermophilus.</title>
        <authorList>
            <person name="Kirino H."/>
            <person name="Aoki M."/>
            <person name="Aoshima M."/>
            <person name="Hayashi Y."/>
            <person name="Ohba M."/>
            <person name="Yamagishi A."/>
            <person name="Wakagi T."/>
            <person name="Oshima T."/>
        </authorList>
    </citation>
    <scope>SEQUENCE REVISION</scope>
</reference>
<reference key="3">
    <citation type="submission" date="2004-11" db="EMBL/GenBank/DDBJ databases">
        <title>Complete genome sequence of Thermus thermophilus HB8.</title>
        <authorList>
            <person name="Masui R."/>
            <person name="Kurokawa K."/>
            <person name="Nakagawa N."/>
            <person name="Tokunaga F."/>
            <person name="Koyama Y."/>
            <person name="Shibata T."/>
            <person name="Oshima T."/>
            <person name="Yokoyama S."/>
            <person name="Yasunaga T."/>
            <person name="Kuramitsu S."/>
        </authorList>
    </citation>
    <scope>NUCLEOTIDE SEQUENCE [LARGE SCALE GENOMIC DNA]</scope>
    <source>
        <strain>ATCC 27634 / DSM 579 / HB8</strain>
    </source>
</reference>
<reference key="4">
    <citation type="journal article" date="1993" name="FEBS Lett.">
        <title>Tyr-139 in Thermus thermophilus 3-isopropylmalate dehydrogenase is involved in catalytic function.</title>
        <authorList>
            <person name="Miyazaki K."/>
            <person name="Oshima T."/>
        </authorList>
    </citation>
    <scope>ENZYME KINETICS</scope>
    <scope>MUTAGENESIS OF TYR-139</scope>
</reference>
<reference key="5">
    <citation type="journal article" date="1994" name="Structure">
        <title>Structure of 3-isopropylmalate dehydrogenase in complex with NAD+: ligand-induced loop closing and mechanism for cofactor specificity.</title>
        <authorList>
            <person name="Hurley J.H."/>
            <person name="Dean A.M."/>
        </authorList>
    </citation>
    <scope>X-RAY CRYSTALLOGRAPHY (2.5 ANGSTROMS) IN COMPLEX WITH NAD</scope>
</reference>
<reference key="6">
    <citation type="journal article" date="1996" name="Acta Crystallogr. D">
        <title>Cryocrystallography of 3-Isopropylmalate dehydrogenase from Thermus thermophilus and its chimeric enzyme.</title>
        <authorList>
            <person name="Nagata C."/>
            <person name="Moriyama H."/>
            <person name="Tanaka N."/>
            <person name="Nakasako M."/>
            <person name="Yamamoto M."/>
            <person name="Ueki T."/>
            <person name="Oshima T."/>
        </authorList>
    </citation>
    <scope>X-RAY CRYSTALLOGRAPHY (2.1 ANGSTROMS)</scope>
    <scope>SUBUNIT</scope>
</reference>
<reference key="7">
    <citation type="journal article" date="1991" name="J. Mol. Biol.">
        <title>Three-dimensional structure of a highly thermostable enzyme, 3-isopropylmalate dehydrogenase of Thermus thermophilus at 2.2-A resolution.</title>
        <authorList>
            <person name="Imada K."/>
            <person name="Sato M."/>
            <person name="Tanaka N."/>
            <person name="Katsube Y."/>
            <person name="Matsuura Y."/>
            <person name="Oshima T."/>
        </authorList>
    </citation>
    <scope>X-RAY CRYSTALLOGRAPHY (2.2 ANGSTROMS)</scope>
    <scope>SUBUNIT</scope>
</reference>
<reference key="8">
    <citation type="journal article" date="2000" name="Protein Eng.">
        <title>Crystal structures of 3-isopropylmalate dehydrogenase with mutations at the C-terminus: crystallographic analyses of structure-stability relationships.</title>
        <authorList>
            <person name="Nurachman Z."/>
            <person name="Akanuma S."/>
            <person name="Sato T."/>
            <person name="Oshima T."/>
            <person name="Tanaka N."/>
        </authorList>
    </citation>
    <scope>X-RAY CRYSTALLOGRAPHY (2.2 ANGSTROMS)</scope>
</reference>
<reference key="9">
    <citation type="journal article" date="2001" name="Acta Crystallogr. D">
        <title>Design, X-ray crystallography, molecular modelling and thermal stability studies of mutant enzymes at site 172 of 3-isopropylmalate dehydrogenase from Thermus thermophilus.</title>
        <authorList>
            <person name="Qu C."/>
            <person name="Akanuma S."/>
            <person name="Tanaka N."/>
            <person name="Moriyama H."/>
            <person name="Oshima T."/>
        </authorList>
    </citation>
    <scope>X-RAY CRYSTALLOGRAPHY (2.1 ANGSTROMS)</scope>
    <scope>SUBUNIT</scope>
</reference>
<protein>
    <recommendedName>
        <fullName>3-isopropylmalate dehydrogenase</fullName>
        <ecNumber>1.1.1.85</ecNumber>
    </recommendedName>
    <alternativeName>
        <fullName>3-IPM-DH</fullName>
    </alternativeName>
    <alternativeName>
        <fullName>Beta-IPM dehydrogenase</fullName>
        <shortName>IMDH</shortName>
    </alternativeName>
</protein>
<dbReference type="EC" id="1.1.1.85"/>
<dbReference type="EMBL" id="K01444">
    <property type="protein sequence ID" value="AAA16706.1"/>
    <property type="molecule type" value="Genomic_DNA"/>
</dbReference>
<dbReference type="EMBL" id="AP008226">
    <property type="protein sequence ID" value="BAD71053.1"/>
    <property type="molecule type" value="Genomic_DNA"/>
</dbReference>
<dbReference type="PIR" id="S41223">
    <property type="entry name" value="DETWIT"/>
</dbReference>
<dbReference type="RefSeq" id="WP_011228534.1">
    <property type="nucleotide sequence ID" value="NC_006461.1"/>
</dbReference>
<dbReference type="RefSeq" id="YP_144496.1">
    <property type="nucleotide sequence ID" value="NC_006461.1"/>
</dbReference>
<dbReference type="PDB" id="1DPZ">
    <property type="method" value="X-ray"/>
    <property type="resolution" value="2.80 A"/>
    <property type="chains" value="A/B=1-345"/>
</dbReference>
<dbReference type="PDB" id="1DR0">
    <property type="method" value="X-ray"/>
    <property type="resolution" value="2.20 A"/>
    <property type="chains" value="A/B=1-345"/>
</dbReference>
<dbReference type="PDB" id="1DR8">
    <property type="method" value="X-ray"/>
    <property type="resolution" value="2.70 A"/>
    <property type="chains" value="A/B=1-344"/>
</dbReference>
<dbReference type="PDB" id="1G2U">
    <property type="method" value="X-ray"/>
    <property type="resolution" value="2.10 A"/>
    <property type="chains" value="A=1-345"/>
</dbReference>
<dbReference type="PDB" id="1GC8">
    <property type="method" value="X-ray"/>
    <property type="resolution" value="2.50 A"/>
    <property type="chains" value="A/B=1-345"/>
</dbReference>
<dbReference type="PDB" id="1GC9">
    <property type="method" value="X-ray"/>
    <property type="resolution" value="2.30 A"/>
    <property type="chains" value="A=1-345"/>
</dbReference>
<dbReference type="PDB" id="1HEX">
    <property type="method" value="X-ray"/>
    <property type="resolution" value="2.50 A"/>
    <property type="chains" value="A=1-345"/>
</dbReference>
<dbReference type="PDB" id="1IDM">
    <property type="method" value="X-ray"/>
    <property type="resolution" value="2.20 A"/>
    <property type="chains" value="A=1-345"/>
</dbReference>
<dbReference type="PDB" id="1IPD">
    <property type="method" value="X-ray"/>
    <property type="resolution" value="2.20 A"/>
    <property type="chains" value="A=1-345"/>
</dbReference>
<dbReference type="PDB" id="1OSI">
    <property type="method" value="X-ray"/>
    <property type="resolution" value="3.00 A"/>
    <property type="chains" value="A/B/C/D=1-345"/>
</dbReference>
<dbReference type="PDB" id="1OSJ">
    <property type="method" value="X-ray"/>
    <property type="resolution" value="2.35 A"/>
    <property type="chains" value="A/B=1-345"/>
</dbReference>
<dbReference type="PDB" id="1XAA">
    <property type="method" value="X-ray"/>
    <property type="resolution" value="2.10 A"/>
    <property type="chains" value="A=1-345"/>
</dbReference>
<dbReference type="PDB" id="1XAB">
    <property type="method" value="X-ray"/>
    <property type="resolution" value="2.10 A"/>
    <property type="chains" value="A=1-345"/>
</dbReference>
<dbReference type="PDB" id="1XAC">
    <property type="method" value="X-ray"/>
    <property type="resolution" value="2.10 A"/>
    <property type="chains" value="A=1-345"/>
</dbReference>
<dbReference type="PDB" id="1XAD">
    <property type="method" value="X-ray"/>
    <property type="resolution" value="2.10 A"/>
    <property type="chains" value="A=1-345"/>
</dbReference>
<dbReference type="PDB" id="2Y3Z">
    <property type="method" value="X-ray"/>
    <property type="resolution" value="1.83 A"/>
    <property type="chains" value="A=1-345"/>
</dbReference>
<dbReference type="PDB" id="2Y40">
    <property type="method" value="X-ray"/>
    <property type="resolution" value="2.50 A"/>
    <property type="chains" value="A/B=1-345"/>
</dbReference>
<dbReference type="PDB" id="2Y41">
    <property type="method" value="X-ray"/>
    <property type="resolution" value="2.20 A"/>
    <property type="chains" value="A/B=1-345"/>
</dbReference>
<dbReference type="PDB" id="2Y42">
    <property type="method" value="X-ray"/>
    <property type="resolution" value="2.50 A"/>
    <property type="chains" value="A/B/C/D=1-345"/>
</dbReference>
<dbReference type="PDB" id="2ZTW">
    <property type="method" value="X-ray"/>
    <property type="resolution" value="2.79 A"/>
    <property type="chains" value="A=1-345"/>
</dbReference>
<dbReference type="PDB" id="4F7I">
    <property type="method" value="X-ray"/>
    <property type="resolution" value="2.00 A"/>
    <property type="chains" value="A/B/C/D=1-345"/>
</dbReference>
<dbReference type="PDB" id="4WUO">
    <property type="method" value="X-ray"/>
    <property type="resolution" value="2.05 A"/>
    <property type="chains" value="A/B=1-345"/>
</dbReference>
<dbReference type="PDBsum" id="1DPZ"/>
<dbReference type="PDBsum" id="1DR0"/>
<dbReference type="PDBsum" id="1DR8"/>
<dbReference type="PDBsum" id="1G2U"/>
<dbReference type="PDBsum" id="1GC8"/>
<dbReference type="PDBsum" id="1GC9"/>
<dbReference type="PDBsum" id="1HEX"/>
<dbReference type="PDBsum" id="1IDM"/>
<dbReference type="PDBsum" id="1IPD"/>
<dbReference type="PDBsum" id="1OSI"/>
<dbReference type="PDBsum" id="1OSJ"/>
<dbReference type="PDBsum" id="1XAA"/>
<dbReference type="PDBsum" id="1XAB"/>
<dbReference type="PDBsum" id="1XAC"/>
<dbReference type="PDBsum" id="1XAD"/>
<dbReference type="PDBsum" id="2Y3Z"/>
<dbReference type="PDBsum" id="2Y40"/>
<dbReference type="PDBsum" id="2Y41"/>
<dbReference type="PDBsum" id="2Y42"/>
<dbReference type="PDBsum" id="2ZTW"/>
<dbReference type="PDBsum" id="4F7I"/>
<dbReference type="PDBsum" id="4WUO"/>
<dbReference type="PCDDB" id="Q5SIY4"/>
<dbReference type="SMR" id="Q5SIY4"/>
<dbReference type="MINT" id="Q5SIY4"/>
<dbReference type="BindingDB" id="Q5SIY4"/>
<dbReference type="ChEMBL" id="CHEMBL3308964"/>
<dbReference type="EnsemblBacteria" id="BAD71053">
    <property type="protein sequence ID" value="BAD71053"/>
    <property type="gene ID" value="BAD71053"/>
</dbReference>
<dbReference type="GeneID" id="3168996"/>
<dbReference type="KEGG" id="ttj:TTHA1230"/>
<dbReference type="PATRIC" id="fig|300852.9.peg.1209"/>
<dbReference type="eggNOG" id="COG0473">
    <property type="taxonomic scope" value="Bacteria"/>
</dbReference>
<dbReference type="HOGENOM" id="CLU_031953_0_3_0"/>
<dbReference type="PhylomeDB" id="Q5SIY4"/>
<dbReference type="BRENDA" id="1.1.1.85">
    <property type="organism ID" value="2305"/>
</dbReference>
<dbReference type="SABIO-RK" id="Q5SIY4"/>
<dbReference type="UniPathway" id="UPA00048">
    <property type="reaction ID" value="UER00072"/>
</dbReference>
<dbReference type="EvolutionaryTrace" id="Q5SIY4"/>
<dbReference type="Proteomes" id="UP000000532">
    <property type="component" value="Chromosome"/>
</dbReference>
<dbReference type="GO" id="GO:0005829">
    <property type="term" value="C:cytosol"/>
    <property type="evidence" value="ECO:0007669"/>
    <property type="project" value="TreeGrafter"/>
</dbReference>
<dbReference type="GO" id="GO:0003862">
    <property type="term" value="F:3-isopropylmalate dehydrogenase activity"/>
    <property type="evidence" value="ECO:0007669"/>
    <property type="project" value="UniProtKB-UniRule"/>
</dbReference>
<dbReference type="GO" id="GO:0042802">
    <property type="term" value="F:identical protein binding"/>
    <property type="evidence" value="ECO:0000353"/>
    <property type="project" value="IntAct"/>
</dbReference>
<dbReference type="GO" id="GO:0000287">
    <property type="term" value="F:magnesium ion binding"/>
    <property type="evidence" value="ECO:0007669"/>
    <property type="project" value="InterPro"/>
</dbReference>
<dbReference type="GO" id="GO:0051287">
    <property type="term" value="F:NAD binding"/>
    <property type="evidence" value="ECO:0007669"/>
    <property type="project" value="InterPro"/>
</dbReference>
<dbReference type="GO" id="GO:0009098">
    <property type="term" value="P:L-leucine biosynthetic process"/>
    <property type="evidence" value="ECO:0007669"/>
    <property type="project" value="UniProtKB-UniRule"/>
</dbReference>
<dbReference type="FunFam" id="3.40.718.10:FF:000006">
    <property type="entry name" value="3-isopropylmalate dehydrogenase"/>
    <property type="match status" value="1"/>
</dbReference>
<dbReference type="Gene3D" id="3.40.718.10">
    <property type="entry name" value="Isopropylmalate Dehydrogenase"/>
    <property type="match status" value="1"/>
</dbReference>
<dbReference type="HAMAP" id="MF_01033">
    <property type="entry name" value="LeuB_type1"/>
    <property type="match status" value="1"/>
</dbReference>
<dbReference type="InterPro" id="IPR019818">
    <property type="entry name" value="IsoCit/isopropylmalate_DH_CS"/>
</dbReference>
<dbReference type="InterPro" id="IPR024084">
    <property type="entry name" value="IsoPropMal-DH-like_dom"/>
</dbReference>
<dbReference type="InterPro" id="IPR004429">
    <property type="entry name" value="Isopropylmalate_DH"/>
</dbReference>
<dbReference type="NCBIfam" id="TIGR00169">
    <property type="entry name" value="leuB"/>
    <property type="match status" value="1"/>
</dbReference>
<dbReference type="PANTHER" id="PTHR42979">
    <property type="entry name" value="3-ISOPROPYLMALATE DEHYDROGENASE"/>
    <property type="match status" value="1"/>
</dbReference>
<dbReference type="PANTHER" id="PTHR42979:SF1">
    <property type="entry name" value="3-ISOPROPYLMALATE DEHYDROGENASE"/>
    <property type="match status" value="1"/>
</dbReference>
<dbReference type="Pfam" id="PF00180">
    <property type="entry name" value="Iso_dh"/>
    <property type="match status" value="1"/>
</dbReference>
<dbReference type="SMART" id="SM01329">
    <property type="entry name" value="Iso_dh"/>
    <property type="match status" value="1"/>
</dbReference>
<dbReference type="SUPFAM" id="SSF53659">
    <property type="entry name" value="Isocitrate/Isopropylmalate dehydrogenase-like"/>
    <property type="match status" value="1"/>
</dbReference>
<dbReference type="PROSITE" id="PS00470">
    <property type="entry name" value="IDH_IMDH"/>
    <property type="match status" value="1"/>
</dbReference>
<evidence type="ECO:0000250" key="1"/>
<evidence type="ECO:0000269" key="2">
    <source>
    </source>
</evidence>
<evidence type="ECO:0000269" key="3">
    <source>
    </source>
</evidence>
<evidence type="ECO:0000269" key="4">
    <source>
    </source>
</evidence>
<evidence type="ECO:0000269" key="5">
    <source>
    </source>
</evidence>
<evidence type="ECO:0000269" key="6">
    <source>
    </source>
</evidence>
<evidence type="ECO:0000305" key="7"/>
<evidence type="ECO:0007829" key="8">
    <source>
        <dbReference type="PDB" id="1GC9"/>
    </source>
</evidence>
<evidence type="ECO:0007829" key="9">
    <source>
        <dbReference type="PDB" id="1IDM"/>
    </source>
</evidence>
<evidence type="ECO:0007829" key="10">
    <source>
        <dbReference type="PDB" id="1XAC"/>
    </source>
</evidence>
<evidence type="ECO:0007829" key="11">
    <source>
        <dbReference type="PDB" id="1XAD"/>
    </source>
</evidence>
<evidence type="ECO:0007829" key="12">
    <source>
        <dbReference type="PDB" id="2Y3Z"/>
    </source>
</evidence>
<evidence type="ECO:0007829" key="13">
    <source>
        <dbReference type="PDB" id="4F7I"/>
    </source>
</evidence>
<organism>
    <name type="scientific">Thermus thermophilus (strain ATCC 27634 / DSM 579 / HB8)</name>
    <dbReference type="NCBI Taxonomy" id="300852"/>
    <lineage>
        <taxon>Bacteria</taxon>
        <taxon>Thermotogati</taxon>
        <taxon>Deinococcota</taxon>
        <taxon>Deinococci</taxon>
        <taxon>Thermales</taxon>
        <taxon>Thermaceae</taxon>
        <taxon>Thermus</taxon>
    </lineage>
</organism>
<gene>
    <name type="primary">leuB</name>
    <name type="ordered locus">TTHA1230</name>
</gene>
<proteinExistence type="evidence at protein level"/>
<feature type="chain" id="PRO_0000083775" description="3-isopropylmalate dehydrogenase">
    <location>
        <begin position="1"/>
        <end position="345"/>
    </location>
</feature>
<feature type="binding site" evidence="5">
    <location>
        <begin position="74"/>
        <end position="87"/>
    </location>
    <ligand>
        <name>NAD(+)</name>
        <dbReference type="ChEBI" id="CHEBI:57540"/>
    </ligand>
</feature>
<feature type="binding site" evidence="1">
    <location>
        <position position="94"/>
    </location>
    <ligand>
        <name>substrate</name>
    </ligand>
</feature>
<feature type="binding site" evidence="1">
    <location>
        <position position="104"/>
    </location>
    <ligand>
        <name>substrate</name>
    </ligand>
</feature>
<feature type="binding site" evidence="1">
    <location>
        <position position="132"/>
    </location>
    <ligand>
        <name>substrate</name>
    </ligand>
</feature>
<feature type="binding site" evidence="1">
    <location>
        <position position="217"/>
    </location>
    <ligand>
        <name>Mg(2+)</name>
        <dbReference type="ChEBI" id="CHEBI:18420"/>
    </ligand>
</feature>
<feature type="binding site" evidence="1">
    <location>
        <position position="217"/>
    </location>
    <ligand>
        <name>substrate</name>
    </ligand>
</feature>
<feature type="binding site" evidence="1">
    <location>
        <position position="241"/>
    </location>
    <ligand>
        <name>Mg(2+)</name>
        <dbReference type="ChEBI" id="CHEBI:18420"/>
    </ligand>
</feature>
<feature type="binding site" evidence="1">
    <location>
        <position position="245"/>
    </location>
    <ligand>
        <name>Mg(2+)</name>
        <dbReference type="ChEBI" id="CHEBI:18420"/>
    </ligand>
</feature>
<feature type="binding site" evidence="5">
    <location>
        <begin position="274"/>
        <end position="286"/>
    </location>
    <ligand>
        <name>NAD(+)</name>
        <dbReference type="ChEBI" id="CHEBI:57540"/>
    </ligand>
</feature>
<feature type="site" description="Important for catalysis">
    <location>
        <position position="139"/>
    </location>
</feature>
<feature type="site" description="Important for catalysis" evidence="1">
    <location>
        <position position="185"/>
    </location>
</feature>
<feature type="mutagenesis site" description="Large decrease in activity and a small decrease in substrate affinity." evidence="6">
    <original>Y</original>
    <variation>F</variation>
    <location>
        <position position="139"/>
    </location>
</feature>
<feature type="sequence conflict" description="In Ref. 1; AAA16706." evidence="7" ref="1">
    <original>R</original>
    <variation>S</variation>
    <location>
        <position position="85"/>
    </location>
</feature>
<feature type="strand" evidence="12">
    <location>
        <begin position="1"/>
        <end position="6"/>
    </location>
</feature>
<feature type="helix" evidence="12">
    <location>
        <begin position="12"/>
        <end position="30"/>
    </location>
</feature>
<feature type="strand" evidence="12">
    <location>
        <begin position="34"/>
        <end position="38"/>
    </location>
</feature>
<feature type="helix" evidence="12">
    <location>
        <begin position="43"/>
        <end position="49"/>
    </location>
</feature>
<feature type="strand" evidence="12">
    <location>
        <begin position="50"/>
        <end position="53"/>
    </location>
</feature>
<feature type="helix" evidence="12">
    <location>
        <begin position="55"/>
        <end position="63"/>
    </location>
</feature>
<feature type="strand" evidence="12">
    <location>
        <begin position="64"/>
        <end position="69"/>
    </location>
</feature>
<feature type="helix" evidence="12">
    <location>
        <begin position="75"/>
        <end position="77"/>
    </location>
</feature>
<feature type="strand" evidence="9">
    <location>
        <begin position="78"/>
        <end position="80"/>
    </location>
</feature>
<feature type="helix" evidence="12">
    <location>
        <begin position="82"/>
        <end position="84"/>
    </location>
</feature>
<feature type="helix" evidence="12">
    <location>
        <begin position="86"/>
        <end position="96"/>
    </location>
</feature>
<feature type="strand" evidence="12">
    <location>
        <begin position="99"/>
        <end position="107"/>
    </location>
</feature>
<feature type="helix" evidence="12">
    <location>
        <begin position="113"/>
        <end position="115"/>
    </location>
</feature>
<feature type="strand" evidence="12">
    <location>
        <begin position="116"/>
        <end position="118"/>
    </location>
</feature>
<feature type="helix" evidence="12">
    <location>
        <begin position="120"/>
        <end position="123"/>
    </location>
</feature>
<feature type="strand" evidence="12">
    <location>
        <begin position="127"/>
        <end position="133"/>
    </location>
</feature>
<feature type="strand" evidence="8">
    <location>
        <begin position="135"/>
        <end position="137"/>
    </location>
</feature>
<feature type="turn" evidence="12">
    <location>
        <begin position="138"/>
        <end position="140"/>
    </location>
</feature>
<feature type="strand" evidence="10">
    <location>
        <begin position="144"/>
        <end position="146"/>
    </location>
</feature>
<feature type="strand" evidence="13">
    <location>
        <begin position="148"/>
        <end position="158"/>
    </location>
</feature>
<feature type="helix" evidence="12">
    <location>
        <begin position="159"/>
        <end position="174"/>
    </location>
</feature>
<feature type="turn" evidence="12">
    <location>
        <begin position="175"/>
        <end position="177"/>
    </location>
</feature>
<feature type="strand" evidence="12">
    <location>
        <begin position="178"/>
        <end position="184"/>
    </location>
</feature>
<feature type="turn" evidence="12">
    <location>
        <begin position="186"/>
        <end position="188"/>
    </location>
</feature>
<feature type="helix" evidence="12">
    <location>
        <begin position="190"/>
        <end position="203"/>
    </location>
</feature>
<feature type="strand" evidence="12">
    <location>
        <begin position="209"/>
        <end position="215"/>
    </location>
</feature>
<feature type="helix" evidence="12">
    <location>
        <begin position="216"/>
        <end position="225"/>
    </location>
</feature>
<feature type="helix" evidence="12">
    <location>
        <begin position="227"/>
        <end position="229"/>
    </location>
</feature>
<feature type="strand" evidence="12">
    <location>
        <begin position="231"/>
        <end position="235"/>
    </location>
</feature>
<feature type="helix" evidence="12">
    <location>
        <begin position="237"/>
        <end position="248"/>
    </location>
</feature>
<feature type="turn" evidence="12">
    <location>
        <begin position="249"/>
        <end position="251"/>
    </location>
</feature>
<feature type="helix" evidence="12">
    <location>
        <begin position="254"/>
        <end position="256"/>
    </location>
</feature>
<feature type="strand" evidence="12">
    <location>
        <begin position="258"/>
        <end position="265"/>
    </location>
</feature>
<feature type="strand" evidence="12">
    <location>
        <begin position="268"/>
        <end position="273"/>
    </location>
</feature>
<feature type="helix" evidence="12">
    <location>
        <begin position="277"/>
        <end position="279"/>
    </location>
</feature>
<feature type="turn" evidence="11">
    <location>
        <begin position="280"/>
        <end position="282"/>
    </location>
</feature>
<feature type="helix" evidence="12">
    <location>
        <begin position="288"/>
        <end position="300"/>
    </location>
</feature>
<feature type="helix" evidence="12">
    <location>
        <begin position="305"/>
        <end position="321"/>
    </location>
</feature>
<feature type="helix" evidence="12">
    <location>
        <begin position="325"/>
        <end position="327"/>
    </location>
</feature>
<feature type="helix" evidence="12">
    <location>
        <begin position="333"/>
        <end position="345"/>
    </location>
</feature>
<name>LEU3_THET8</name>
<keyword id="KW-0002">3D-structure</keyword>
<keyword id="KW-0028">Amino-acid biosynthesis</keyword>
<keyword id="KW-0100">Branched-chain amino acid biosynthesis</keyword>
<keyword id="KW-0963">Cytoplasm</keyword>
<keyword id="KW-0432">Leucine biosynthesis</keyword>
<keyword id="KW-0460">Magnesium</keyword>
<keyword id="KW-0464">Manganese</keyword>
<keyword id="KW-0479">Metal-binding</keyword>
<keyword id="KW-0520">NAD</keyword>
<keyword id="KW-0560">Oxidoreductase</keyword>
<keyword id="KW-1185">Reference proteome</keyword>
<sequence>MKVAVLPGDGIGPEVTEAALKVLRALDEAEGLGLAYEVFPFGGAAIDAFGEPFPEPTRKGVEEAEAVLLGSVGGPKWDGLPRKIRPETGLLSLRKSQDLFANLRPAKVFPGLERLSPLKEEIARGVDVLIVRELTGGIYFGEPRGMSEAEAWNTERYSKPEVERVARVAFEAARKRRKHVVSVDKANVLEVGEFWRKTVEEVGRGYPDVALEHQYVDAMAMHLVRSPARFDVVVTGNIFGDILSDLASVLPGSLGLLPSASLGRGTPVFEPVHGSAPDIAGKGIANPTAAILSAAMMLEHAFGLVELARKVEDAVAKALLETPPPDLGGSAGTEAFTATVLRHLA</sequence>